<proteinExistence type="evidence at protein level"/>
<feature type="signal peptide" evidence="2">
    <location>
        <begin position="1"/>
        <end position="28"/>
    </location>
</feature>
<feature type="chain" id="PRO_0000008592" description="Acetylcholinesterase">
    <location>
        <begin position="29"/>
        <end position="606"/>
    </location>
</feature>
<feature type="active site" description="Acyl-ester intermediate" evidence="3">
    <location>
        <position position="231"/>
    </location>
</feature>
<feature type="active site" description="Charge relay system" evidence="1">
    <location>
        <position position="358"/>
    </location>
</feature>
<feature type="active site" description="Charge relay system" evidence="1">
    <location>
        <position position="471"/>
    </location>
</feature>
<feature type="glycosylation site" description="N-linked (GlcNAc...) asparagine" evidence="4 13">
    <location>
        <position position="289"/>
    </location>
</feature>
<feature type="glycosylation site" description="N-linked (GlcNAc...) asparagine" evidence="4 13">
    <location>
        <position position="374"/>
    </location>
</feature>
<feature type="glycosylation site" description="N-linked (GlcNAc...) asparagine" evidence="4 13">
    <location>
        <position position="484"/>
    </location>
</feature>
<feature type="disulfide bond" evidence="4 13">
    <location>
        <begin position="98"/>
        <end position="125"/>
    </location>
</feature>
<feature type="disulfide bond" evidence="4 13">
    <location>
        <begin position="285"/>
        <end position="296"/>
    </location>
</feature>
<feature type="disulfide bond" evidence="4 13">
    <location>
        <begin position="433"/>
        <end position="552"/>
    </location>
</feature>
<feature type="disulfide bond" description="Interchain; in isoform T" evidence="1">
    <location>
        <position position="603"/>
    </location>
</feature>
<feature type="splice variant" id="VSP_008215" description="In isoform S." evidence="11">
    <original>DNIEEAERQWKLEFHLWSAYMMHWKSQFDHYNKQDRCSEL</original>
    <variation>VDPPRADRRRRSARA</variation>
    <location>
        <begin position="567"/>
        <end position="606"/>
    </location>
</feature>
<feature type="mutagenesis site" description="Increases peripheral site inhibitor binding." evidence="6">
    <original>M</original>
    <variation>Y</variation>
    <location>
        <position position="101"/>
    </location>
</feature>
<feature type="mutagenesis site" description="Increases peripheral site inhibitor binding." evidence="6">
    <original>K</original>
    <variation>D</variation>
    <location>
        <position position="316"/>
    </location>
</feature>
<feature type="sequence conflict" description="In Ref. 3; AA sequence." evidence="12" ref="3">
    <original>T</original>
    <variation>S</variation>
    <location>
        <position position="268"/>
    </location>
</feature>
<feature type="sequence conflict" description="In Ref. 3; AA sequence." evidence="12" ref="3">
    <original>V</original>
    <variation>L</variation>
    <location>
        <position position="350"/>
    </location>
</feature>
<feature type="strand" evidence="14">
    <location>
        <begin position="38"/>
        <end position="41"/>
    </location>
</feature>
<feature type="strand" evidence="14">
    <location>
        <begin position="44"/>
        <end position="47"/>
    </location>
</feature>
<feature type="strand" evidence="14">
    <location>
        <begin position="49"/>
        <end position="53"/>
    </location>
</feature>
<feature type="strand" evidence="14">
    <location>
        <begin position="56"/>
        <end position="67"/>
    </location>
</feature>
<feature type="helix" evidence="14">
    <location>
        <begin position="72"/>
        <end position="74"/>
    </location>
</feature>
<feature type="strand" evidence="14">
    <location>
        <begin position="86"/>
        <end position="90"/>
    </location>
</feature>
<feature type="helix" evidence="14">
    <location>
        <begin position="110"/>
        <end position="113"/>
    </location>
</feature>
<feature type="strand" evidence="14">
    <location>
        <begin position="121"/>
        <end position="123"/>
    </location>
</feature>
<feature type="strand" evidence="14">
    <location>
        <begin position="127"/>
        <end position="135"/>
    </location>
</feature>
<feature type="strand" evidence="14">
    <location>
        <begin position="138"/>
        <end position="146"/>
    </location>
</feature>
<feature type="turn" evidence="14">
    <location>
        <begin position="150"/>
        <end position="152"/>
    </location>
</feature>
<feature type="helix" evidence="14">
    <location>
        <begin position="159"/>
        <end position="161"/>
    </location>
</feature>
<feature type="helix" evidence="14">
    <location>
        <begin position="164"/>
        <end position="170"/>
    </location>
</feature>
<feature type="strand" evidence="14">
    <location>
        <begin position="173"/>
        <end position="176"/>
    </location>
</feature>
<feature type="helix" evidence="14">
    <location>
        <begin position="183"/>
        <end position="186"/>
    </location>
</feature>
<feature type="helix" evidence="14">
    <location>
        <begin position="199"/>
        <end position="214"/>
    </location>
</feature>
<feature type="helix" evidence="14">
    <location>
        <begin position="216"/>
        <end position="218"/>
    </location>
</feature>
<feature type="strand" evidence="14">
    <location>
        <begin position="220"/>
        <end position="230"/>
    </location>
</feature>
<feature type="helix" evidence="14">
    <location>
        <begin position="232"/>
        <end position="242"/>
    </location>
</feature>
<feature type="strand" evidence="14">
    <location>
        <begin position="246"/>
        <end position="249"/>
    </location>
</feature>
<feature type="strand" evidence="14">
    <location>
        <begin position="251"/>
        <end position="257"/>
    </location>
</feature>
<feature type="turn" evidence="14">
    <location>
        <begin position="263"/>
        <end position="265"/>
    </location>
</feature>
<feature type="helix" evidence="14">
    <location>
        <begin position="269"/>
        <end position="282"/>
    </location>
</feature>
<feature type="strand" evidence="14">
    <location>
        <begin position="288"/>
        <end position="290"/>
    </location>
</feature>
<feature type="helix" evidence="14">
    <location>
        <begin position="291"/>
        <end position="299"/>
    </location>
</feature>
<feature type="helix" evidence="14">
    <location>
        <begin position="302"/>
        <end position="309"/>
    </location>
</feature>
<feature type="helix" evidence="14">
    <location>
        <begin position="310"/>
        <end position="312"/>
    </location>
</feature>
<feature type="strand" evidence="14">
    <location>
        <begin position="314"/>
        <end position="316"/>
    </location>
</feature>
<feature type="strand" evidence="14">
    <location>
        <begin position="329"/>
        <end position="331"/>
    </location>
</feature>
<feature type="helix" evidence="14">
    <location>
        <begin position="336"/>
        <end position="342"/>
    </location>
</feature>
<feature type="strand" evidence="14">
    <location>
        <begin position="350"/>
        <end position="359"/>
    </location>
</feature>
<feature type="helix" evidence="14">
    <location>
        <begin position="360"/>
        <end position="363"/>
    </location>
</feature>
<feature type="turn" evidence="14">
    <location>
        <begin position="364"/>
        <end position="366"/>
    </location>
</feature>
<feature type="helix" evidence="14">
    <location>
        <begin position="380"/>
        <end position="390"/>
    </location>
</feature>
<feature type="helix" evidence="14">
    <location>
        <begin position="396"/>
        <end position="405"/>
    </location>
</feature>
<feature type="strand" evidence="14">
    <location>
        <begin position="409"/>
        <end position="411"/>
    </location>
</feature>
<feature type="helix" evidence="14">
    <location>
        <begin position="415"/>
        <end position="430"/>
    </location>
</feature>
<feature type="helix" evidence="14">
    <location>
        <begin position="432"/>
        <end position="443"/>
    </location>
</feature>
<feature type="turn" evidence="14">
    <location>
        <begin position="444"/>
        <end position="446"/>
    </location>
</feature>
<feature type="strand" evidence="14">
    <location>
        <begin position="449"/>
        <end position="454"/>
    </location>
</feature>
<feature type="helix" evidence="14">
    <location>
        <begin position="465"/>
        <end position="467"/>
    </location>
</feature>
<feature type="turn" evidence="14">
    <location>
        <begin position="471"/>
        <end position="474"/>
    </location>
</feature>
<feature type="helix" evidence="14">
    <location>
        <begin position="475"/>
        <end position="478"/>
    </location>
</feature>
<feature type="helix" evidence="14">
    <location>
        <begin position="481"/>
        <end position="483"/>
    </location>
</feature>
<feature type="helix" evidence="14">
    <location>
        <begin position="485"/>
        <end position="487"/>
    </location>
</feature>
<feature type="helix" evidence="14">
    <location>
        <begin position="491"/>
        <end position="509"/>
    </location>
</feature>
<feature type="strand" evidence="14">
    <location>
        <begin position="511"/>
        <end position="514"/>
    </location>
</feature>
<feature type="strand" evidence="14">
    <location>
        <begin position="528"/>
        <end position="530"/>
    </location>
</feature>
<feature type="strand" evidence="14">
    <location>
        <begin position="533"/>
        <end position="539"/>
    </location>
</feature>
<feature type="strand" evidence="14">
    <location>
        <begin position="542"/>
        <end position="545"/>
    </location>
</feature>
<feature type="helix" evidence="14">
    <location>
        <begin position="549"/>
        <end position="556"/>
    </location>
</feature>
<feature type="helix" evidence="14">
    <location>
        <begin position="558"/>
        <end position="565"/>
    </location>
</feature>
<reference key="1">
    <citation type="journal article" date="1996" name="J. Biol. Chem.">
        <title>Cloning and expression of acetylcholinesterase from Bungarus fasciatus venom. A new type of COOH-terminal domain; involvement of a positively charged residue in the peripheral site.</title>
        <authorList>
            <person name="Cousin X."/>
            <person name="Bon S."/>
            <person name="Duval N."/>
            <person name="Massoulie J."/>
            <person name="Bon C."/>
        </authorList>
    </citation>
    <scope>NUCLEOTIDE SEQUENCE [MRNA] (ISOFORM S)</scope>
    <scope>CATALYTIC ACTIVITY</scope>
    <scope>ACTIVITY REGULATION</scope>
    <scope>BIOPHYSICOCHEMICAL PROPERTIES</scope>
    <scope>MUTAGENESIS OF MET-101 AND LYS-316</scope>
    <source>
        <tissue>Venom gland</tissue>
    </source>
</reference>
<reference key="2">
    <citation type="journal article" date="1998" name="J. Biol. Chem.">
        <title>Identification of a novel type of alternatively spliced exon from the acetylcholinesterase gene of Bungarus fasciatus. Molecular forms of acetylcholinesterase in the snake liver and muscle.</title>
        <authorList>
            <person name="Cousin X."/>
            <person name="Bon S."/>
            <person name="Massoulie J."/>
            <person name="Bon C."/>
        </authorList>
    </citation>
    <scope>NUCLEOTIDE SEQUENCE [GENOMIC DNA] OF 512-606 (ISOFORMS S AND T)</scope>
    <scope>FUNCTION</scope>
    <scope>CATALYTIC ACTIVITY</scope>
    <scope>SUBUNIT</scope>
    <scope>TISSUE SPECIFICITY</scope>
    <source>
        <tissue>Liver</tissue>
        <tissue>Muscle</tissue>
    </source>
</reference>
<reference key="3">
    <citation type="journal article" date="1996" name="FEBS Lett.">
        <title>Acetylcholinesterase from Bungarus venom: a monomeric species.</title>
        <authorList>
            <person name="Cousin X."/>
            <person name="Creminon C."/>
            <person name="Grassi J."/>
            <person name="Meflah K."/>
            <person name="Cornu G."/>
            <person name="Saliou B."/>
            <person name="Bon S."/>
            <person name="Massoulie J."/>
            <person name="Bon C."/>
        </authorList>
    </citation>
    <scope>PROTEIN SEQUENCE OF 206-220; 253-272; 321-340; 347-372 AND 503-511</scope>
    <scope>FUNCTION</scope>
    <scope>CATALYTIC ACTIVITY</scope>
    <scope>ACTIVITY REGULATION</scope>
    <scope>SUBUNIT</scope>
    <source>
        <tissue>Venom</tissue>
    </source>
</reference>
<reference key="4">
    <citation type="journal article" date="1973" name="Eur. J. Biochem.">
        <title>The acetylcholinesterase of Bungarus fasciatus venom.</title>
        <authorList>
            <person name="Kumar V."/>
            <person name="Elliott W.B."/>
        </authorList>
    </citation>
    <scope>CATALYTIC ACTIVITY</scope>
    <scope>BIOPHYSICOCHEMICAL PROPERTIES</scope>
    <scope>ACTIVITY REGULATION</scope>
    <source>
        <tissue>Venom</tissue>
    </source>
</reference>
<reference key="5">
    <citation type="journal article" date="1997" name="Biochim. Biophys. Acta">
        <title>Acetylcholinesterases from Elapidae snake venoms: biochemical, immunological and enzymatic characterization.</title>
        <authorList>
            <person name="Frobert Y."/>
            <person name="Creminon C."/>
            <person name="Cousin X."/>
            <person name="Remy M.H."/>
            <person name="Chatel J.M."/>
            <person name="Bon S."/>
            <person name="Bon C."/>
            <person name="Grassi J."/>
        </authorList>
    </citation>
    <scope>ACTIVITY REGULATION</scope>
</reference>
<reference key="6">
    <citation type="journal article" date="2015" name="J. Biol. Chem.">
        <title>Crystal structure of snake venom acetylcholinesterase in complex with inhibitory antibody fragment Fab410 bound at the peripheral site: evidence for open and closed states of a back door channel.</title>
        <authorList>
            <person name="Bourne Y."/>
            <person name="Renault L."/>
            <person name="Marchot P."/>
        </authorList>
    </citation>
    <scope>X-RAY CRYSTALLOGRAPHY (2.7 ANGSTROMS) OF 32-566 IN COMPLEX WITH ANTIBODY</scope>
    <scope>FUNCTION</scope>
    <scope>CATALYTIC ACTIVITY</scope>
    <scope>DISULFIDE BOND</scope>
    <scope>GLYCOSYLATION AT ASN-289; ASN-374 AND ASN-484</scope>
    <scope>ACTIVITY REGULATION</scope>
    <scope>SUBUNIT</scope>
    <source>
        <tissue>Venom</tissue>
    </source>
</reference>
<evidence type="ECO:0000250" key="1"/>
<evidence type="ECO:0000255" key="2"/>
<evidence type="ECO:0000255" key="3">
    <source>
        <dbReference type="PROSITE-ProRule" id="PRU10039"/>
    </source>
</evidence>
<evidence type="ECO:0000269" key="4">
    <source>
    </source>
</evidence>
<evidence type="ECO:0000269" key="5">
    <source>
    </source>
</evidence>
<evidence type="ECO:0000269" key="6">
    <source>
    </source>
</evidence>
<evidence type="ECO:0000269" key="7">
    <source>
    </source>
</evidence>
<evidence type="ECO:0000269" key="8">
    <source>
    </source>
</evidence>
<evidence type="ECO:0000269" key="9">
    <source>
    </source>
</evidence>
<evidence type="ECO:0000303" key="10">
    <source>
    </source>
</evidence>
<evidence type="ECO:0000303" key="11">
    <source>
    </source>
</evidence>
<evidence type="ECO:0000305" key="12"/>
<evidence type="ECO:0007744" key="13">
    <source>
        <dbReference type="PDB" id="4QWW"/>
    </source>
</evidence>
<evidence type="ECO:0007829" key="14">
    <source>
        <dbReference type="PDB" id="4QWW"/>
    </source>
</evidence>
<dbReference type="EC" id="3.1.1.7" evidence="7 9"/>
<dbReference type="EMBL" id="U54591">
    <property type="protein sequence ID" value="AAC59905.1"/>
    <property type="molecule type" value="mRNA"/>
</dbReference>
<dbReference type="EMBL" id="AF045238">
    <property type="protein sequence ID" value="AAC16420.1"/>
    <property type="molecule type" value="Genomic_DNA"/>
</dbReference>
<dbReference type="EMBL" id="AF045238">
    <property type="protein sequence ID" value="AAC16421.1"/>
    <property type="molecule type" value="Genomic_DNA"/>
</dbReference>
<dbReference type="PDB" id="4QWW">
    <property type="method" value="X-ray"/>
    <property type="resolution" value="2.70 A"/>
    <property type="chains" value="A/B=32-566"/>
</dbReference>
<dbReference type="PDBsum" id="4QWW"/>
<dbReference type="SMR" id="Q92035"/>
<dbReference type="ESTHER" id="bunfa-ACHE">
    <property type="family name" value="ACHE"/>
</dbReference>
<dbReference type="MEROPS" id="S09.979"/>
<dbReference type="GlyCosmos" id="Q92035">
    <property type="glycosylation" value="3 sites, No reported glycans"/>
</dbReference>
<dbReference type="iPTMnet" id="Q92035"/>
<dbReference type="ABCD" id="Q92035">
    <property type="antibodies" value="1 sequenced antibody"/>
</dbReference>
<dbReference type="EvolutionaryTrace" id="Q92035"/>
<dbReference type="GO" id="GO:0005615">
    <property type="term" value="C:extracellular space"/>
    <property type="evidence" value="ECO:0007669"/>
    <property type="project" value="TreeGrafter"/>
</dbReference>
<dbReference type="GO" id="GO:0005886">
    <property type="term" value="C:plasma membrane"/>
    <property type="evidence" value="ECO:0007669"/>
    <property type="project" value="UniProtKB-SubCell"/>
</dbReference>
<dbReference type="GO" id="GO:0045202">
    <property type="term" value="C:synapse"/>
    <property type="evidence" value="ECO:0007669"/>
    <property type="project" value="UniProtKB-SubCell"/>
</dbReference>
<dbReference type="GO" id="GO:0043083">
    <property type="term" value="C:synaptic cleft"/>
    <property type="evidence" value="ECO:0007669"/>
    <property type="project" value="GOC"/>
</dbReference>
<dbReference type="GO" id="GO:0003990">
    <property type="term" value="F:acetylcholinesterase activity"/>
    <property type="evidence" value="ECO:0007669"/>
    <property type="project" value="UniProtKB-EC"/>
</dbReference>
<dbReference type="GO" id="GO:0090729">
    <property type="term" value="F:toxin activity"/>
    <property type="evidence" value="ECO:0007669"/>
    <property type="project" value="UniProtKB-KW"/>
</dbReference>
<dbReference type="GO" id="GO:0001507">
    <property type="term" value="P:acetylcholine catabolic process in synaptic cleft"/>
    <property type="evidence" value="ECO:0007669"/>
    <property type="project" value="InterPro"/>
</dbReference>
<dbReference type="GO" id="GO:0019695">
    <property type="term" value="P:choline metabolic process"/>
    <property type="evidence" value="ECO:0007669"/>
    <property type="project" value="TreeGrafter"/>
</dbReference>
<dbReference type="CDD" id="cd00312">
    <property type="entry name" value="Esterase_lipase"/>
    <property type="match status" value="1"/>
</dbReference>
<dbReference type="FunFam" id="3.40.50.1820:FF:000029">
    <property type="entry name" value="Acetylcholinesterase"/>
    <property type="match status" value="1"/>
</dbReference>
<dbReference type="Gene3D" id="3.40.50.1820">
    <property type="entry name" value="alpha/beta hydrolase"/>
    <property type="match status" value="1"/>
</dbReference>
<dbReference type="InterPro" id="IPR029058">
    <property type="entry name" value="AB_hydrolase_fold"/>
</dbReference>
<dbReference type="InterPro" id="IPR050654">
    <property type="entry name" value="AChE-related_enzymes"/>
</dbReference>
<dbReference type="InterPro" id="IPR014788">
    <property type="entry name" value="AChE_tetra"/>
</dbReference>
<dbReference type="InterPro" id="IPR000908">
    <property type="entry name" value="Acylcholinesterase_fish/snake"/>
</dbReference>
<dbReference type="InterPro" id="IPR002018">
    <property type="entry name" value="CarbesteraseB"/>
</dbReference>
<dbReference type="InterPro" id="IPR019826">
    <property type="entry name" value="Carboxylesterase_B_AS"/>
</dbReference>
<dbReference type="InterPro" id="IPR019819">
    <property type="entry name" value="Carboxylesterase_B_CS"/>
</dbReference>
<dbReference type="InterPro" id="IPR000997">
    <property type="entry name" value="Cholinesterase"/>
</dbReference>
<dbReference type="PANTHER" id="PTHR43918">
    <property type="entry name" value="ACETYLCHOLINESTERASE"/>
    <property type="match status" value="1"/>
</dbReference>
<dbReference type="PANTHER" id="PTHR43918:SF11">
    <property type="entry name" value="ACETYLCHOLINESTERASE"/>
    <property type="match status" value="1"/>
</dbReference>
<dbReference type="Pfam" id="PF08674">
    <property type="entry name" value="AChE_tetra"/>
    <property type="match status" value="1"/>
</dbReference>
<dbReference type="Pfam" id="PF00135">
    <property type="entry name" value="COesterase"/>
    <property type="match status" value="1"/>
</dbReference>
<dbReference type="PRINTS" id="PR00879">
    <property type="entry name" value="ACHEFISH"/>
</dbReference>
<dbReference type="PRINTS" id="PR00878">
    <property type="entry name" value="CHOLNESTRASE"/>
</dbReference>
<dbReference type="SUPFAM" id="SSF53474">
    <property type="entry name" value="alpha/beta-Hydrolases"/>
    <property type="match status" value="1"/>
</dbReference>
<dbReference type="PROSITE" id="PS00122">
    <property type="entry name" value="CARBOXYLESTERASE_B_1"/>
    <property type="match status" value="1"/>
</dbReference>
<dbReference type="PROSITE" id="PS00941">
    <property type="entry name" value="CARBOXYLESTERASE_B_2"/>
    <property type="match status" value="1"/>
</dbReference>
<sequence>MPSCQPGKMPAPWPWWLQLLLCIPSCVAVLPGRAGELKVSTQTGSVRGLSLPVLDGHVSAFLGIPFAEPPLGRMRFLRPEPVKPWQHVLDATSYKPACYQMVDTSYPGFQGTEMWNPNRGMSEDCLYLNIWVPSPRPKDAPVLVWIYGGGFYSGAASLDVYDGRFLTYTQNVILVSLSYRVGAFGFLGLPGSPEAPGNMGLLDQRLALQWIQNNIHPFGGNPRAVTVFGESAGAASVGMHLLSTQSRTLFQRAILQSGGPNAPWATVTPAESRGRAALLGKQLGCHFNNDSELVSCLRSKNPQELIDEEWSVLPYKSIFRFPFVPVIDGDFFPDTPEAMLSSGNFKETQVLLGVVKDEGSYFLIYGLPGFSKDNESLISRADFLEGVRMSVPHANDIATDAVVLQYTDWQDQDNREKNREALDDIVGDHNVICPVVQFANDYAKRNSKVYAYLFDHRASNLLWPPWMGVPHGYEIEFVFGLPLNDSLNYTPQEKELSRRMMRYWANFARTGNPTDPADKSGAWPTYTASQPQYVQLNTQPLATQPSLRAQICAFWNHFLPKLLNATDNIEEAERQWKLEFHLWSAYMMHWKSQFDHYNKQDRCSEL</sequence>
<gene>
    <name type="primary">ACHE</name>
</gene>
<organism>
    <name type="scientific">Bungarus fasciatus</name>
    <name type="common">Banded krait</name>
    <name type="synonym">Pseudoboa fasciata</name>
    <dbReference type="NCBI Taxonomy" id="8613"/>
    <lineage>
        <taxon>Eukaryota</taxon>
        <taxon>Metazoa</taxon>
        <taxon>Chordata</taxon>
        <taxon>Craniata</taxon>
        <taxon>Vertebrata</taxon>
        <taxon>Euteleostomi</taxon>
        <taxon>Lepidosauria</taxon>
        <taxon>Squamata</taxon>
        <taxon>Bifurcata</taxon>
        <taxon>Unidentata</taxon>
        <taxon>Episquamata</taxon>
        <taxon>Toxicofera</taxon>
        <taxon>Serpentes</taxon>
        <taxon>Colubroidea</taxon>
        <taxon>Elapidae</taxon>
        <taxon>Bungarinae</taxon>
        <taxon>Bungarus</taxon>
    </lineage>
</organism>
<protein>
    <recommendedName>
        <fullName>Acetylcholinesterase</fullName>
        <shortName evidence="10">BfAChE</shortName>
        <ecNumber evidence="7 9">3.1.1.7</ecNumber>
    </recommendedName>
</protein>
<name>ACES_BUNFA</name>
<keyword id="KW-0002">3D-structure</keyword>
<keyword id="KW-0025">Alternative splicing</keyword>
<keyword id="KW-1003">Cell membrane</keyword>
<keyword id="KW-0903">Direct protein sequencing</keyword>
<keyword id="KW-1015">Disulfide bond</keyword>
<keyword id="KW-0325">Glycoprotein</keyword>
<keyword id="KW-0378">Hydrolase</keyword>
<keyword id="KW-0472">Membrane</keyword>
<keyword id="KW-0531">Neurotransmitter degradation</keyword>
<keyword id="KW-0964">Secreted</keyword>
<keyword id="KW-0719">Serine esterase</keyword>
<keyword id="KW-0732">Signal</keyword>
<keyword id="KW-0770">Synapse</keyword>
<keyword id="KW-0800">Toxin</keyword>
<comment type="function">
    <text>In muscle, it terminates signal transduction at the neuromuscular junction by rapid hydrolysis of the acetylcholine released into the synaptic cleft. In liver, its function is unclear: it could serve as a safeguard against any diffusion of acetylcholine from synapses into the circulation. In venom, its toxic role is unclear: it could result in less musculatory control by rapidly hydrolyzing acetylcholine, or that it works synergistically with alkaline phosphatase (ALP) in paralyzing prey through hypotension.</text>
</comment>
<comment type="catalytic activity">
    <reaction evidence="4 5 7 9">
        <text>acetylcholine + H2O = choline + acetate + H(+)</text>
        <dbReference type="Rhea" id="RHEA:17561"/>
        <dbReference type="ChEBI" id="CHEBI:15354"/>
        <dbReference type="ChEBI" id="CHEBI:15355"/>
        <dbReference type="ChEBI" id="CHEBI:15377"/>
        <dbReference type="ChEBI" id="CHEBI:15378"/>
        <dbReference type="ChEBI" id="CHEBI:30089"/>
        <dbReference type="EC" id="3.1.1.7"/>
    </reaction>
</comment>
<comment type="activity regulation">
    <text evidence="4 5 6 8">Inhibited by active site inhibitors: edrophonium, trimethyl-(m-acetamidopheny1)-ammonium iodide, and trimethyl-(p-acetarnidopheny1)-ammonium iodide (PubMed:4197660, PubMed:9187246). Inhibited by both active and peripheral site inhibitors: decamethonium, and BW284c51 (PubMed:8662867, PubMed:9187246). Inhibited by peripheral site inhibitors: snake acetylcholinesterase fasciculin-2, propidium, gallamine, D-tubocurarine, and tacrine (PubMed:25411244, PubMed:8662867, PubMed:9187246). Also inhibited by antibodies Elec410 and Fab410 (PubMed:25411244).</text>
</comment>
<comment type="biophysicochemical properties">
    <kinetics>
        <KM evidence="5">41.7 uM for acetylcholine (at pH 7.5)</KM>
        <KM evidence="6">78.8 uM for acetylthiocholine (at pH 7.4)</KM>
        <Vmax evidence="5">8.6 mmol/min/mg enzyme</Vmax>
    </kinetics>
</comment>
<comment type="subunit">
    <text evidence="7 9">Isoform S is monomeric (PubMed:8674549, PubMed:9187246, PubMed:9545320). Isoform T can form oligomers, including collagen-tailed forms (PubMed:9545320).</text>
</comment>
<comment type="subcellular location">
    <subcellularLocation>
        <location>Synapse</location>
    </subcellularLocation>
    <subcellularLocation>
        <location>Secreted</location>
    </subcellularLocation>
    <subcellularLocation>
        <location evidence="1">Cell membrane</location>
        <topology evidence="1">Peripheral membrane protein</topology>
    </subcellularLocation>
</comment>
<comment type="alternative products">
    <event type="alternative splicing"/>
    <isoform>
        <id>Q92035-2</id>
        <name>T</name>
        <sequence type="displayed"/>
    </isoform>
    <isoform>
        <id>Q92035-1</id>
        <name>S</name>
        <sequence type="described" ref="VSP_008215"/>
    </isoform>
</comment>
<comment type="tissue specificity">
    <text evidence="9">Liver and muscle contain both isoform T and isoform S. Venom gland predominantly contains isoform S.</text>
</comment>
<comment type="PTM">
    <text evidence="7">The N-terminus is blocked.</text>
</comment>
<comment type="miscellaneous">
    <molecule>Isoform S</molecule>
    <text evidence="6">A cleavage of the very basic 8-residue C-terminal fragment occurs upon secretion.</text>
</comment>
<comment type="similarity">
    <text evidence="12">Belongs to the type-B carboxylesterase/lipase family.</text>
</comment>
<comment type="caution">
    <text evidence="12">It is uncertain whether Met-1 or Met-9 is the initiator.</text>
</comment>
<accession>Q92035</accession>
<accession>O73748</accession>
<accession>Q10720</accession>